<dbReference type="EMBL" id="AP009152">
    <property type="protein sequence ID" value="BAG29654.1"/>
    <property type="molecule type" value="Genomic_DNA"/>
</dbReference>
<dbReference type="RefSeq" id="WP_012398375.1">
    <property type="nucleotide sequence ID" value="NZ_VECX01000006.1"/>
</dbReference>
<dbReference type="SMR" id="B2GHV1"/>
<dbReference type="STRING" id="378753.KRH_13070"/>
<dbReference type="GeneID" id="93231061"/>
<dbReference type="KEGG" id="krh:KRH_13070"/>
<dbReference type="eggNOG" id="COG0268">
    <property type="taxonomic scope" value="Bacteria"/>
</dbReference>
<dbReference type="HOGENOM" id="CLU_160655_0_1_11"/>
<dbReference type="OrthoDB" id="9807974at2"/>
<dbReference type="Proteomes" id="UP000008838">
    <property type="component" value="Chromosome"/>
</dbReference>
<dbReference type="GO" id="GO:0005829">
    <property type="term" value="C:cytosol"/>
    <property type="evidence" value="ECO:0007669"/>
    <property type="project" value="TreeGrafter"/>
</dbReference>
<dbReference type="GO" id="GO:0015935">
    <property type="term" value="C:small ribosomal subunit"/>
    <property type="evidence" value="ECO:0007669"/>
    <property type="project" value="TreeGrafter"/>
</dbReference>
<dbReference type="GO" id="GO:0070181">
    <property type="term" value="F:small ribosomal subunit rRNA binding"/>
    <property type="evidence" value="ECO:0007669"/>
    <property type="project" value="TreeGrafter"/>
</dbReference>
<dbReference type="GO" id="GO:0003735">
    <property type="term" value="F:structural constituent of ribosome"/>
    <property type="evidence" value="ECO:0007669"/>
    <property type="project" value="InterPro"/>
</dbReference>
<dbReference type="GO" id="GO:0006412">
    <property type="term" value="P:translation"/>
    <property type="evidence" value="ECO:0007669"/>
    <property type="project" value="UniProtKB-UniRule"/>
</dbReference>
<dbReference type="FunFam" id="1.20.58.110:FF:000001">
    <property type="entry name" value="30S ribosomal protein S20"/>
    <property type="match status" value="1"/>
</dbReference>
<dbReference type="Gene3D" id="1.20.58.110">
    <property type="entry name" value="Ribosomal protein S20"/>
    <property type="match status" value="1"/>
</dbReference>
<dbReference type="HAMAP" id="MF_00500">
    <property type="entry name" value="Ribosomal_bS20"/>
    <property type="match status" value="1"/>
</dbReference>
<dbReference type="InterPro" id="IPR002583">
    <property type="entry name" value="Ribosomal_bS20"/>
</dbReference>
<dbReference type="InterPro" id="IPR036510">
    <property type="entry name" value="Ribosomal_bS20_sf"/>
</dbReference>
<dbReference type="NCBIfam" id="TIGR00029">
    <property type="entry name" value="S20"/>
    <property type="match status" value="1"/>
</dbReference>
<dbReference type="PANTHER" id="PTHR33398">
    <property type="entry name" value="30S RIBOSOMAL PROTEIN S20"/>
    <property type="match status" value="1"/>
</dbReference>
<dbReference type="PANTHER" id="PTHR33398:SF1">
    <property type="entry name" value="SMALL RIBOSOMAL SUBUNIT PROTEIN BS20C"/>
    <property type="match status" value="1"/>
</dbReference>
<dbReference type="Pfam" id="PF01649">
    <property type="entry name" value="Ribosomal_S20p"/>
    <property type="match status" value="1"/>
</dbReference>
<dbReference type="SUPFAM" id="SSF46992">
    <property type="entry name" value="Ribosomal protein S20"/>
    <property type="match status" value="1"/>
</dbReference>
<protein>
    <recommendedName>
        <fullName evidence="1">Small ribosomal subunit protein bS20</fullName>
    </recommendedName>
    <alternativeName>
        <fullName evidence="2">30S ribosomal protein S20</fullName>
    </alternativeName>
</protein>
<proteinExistence type="inferred from homology"/>
<evidence type="ECO:0000255" key="1">
    <source>
        <dbReference type="HAMAP-Rule" id="MF_00500"/>
    </source>
</evidence>
<evidence type="ECO:0000305" key="2"/>
<sequence>MANIKSQKKRILTNEKARLRNNSYKSELKTLIRKVDAAVESGNKDAAAETLRTASRKLDKAVSKGVLHKNTAANKKSGLAKKVAKI</sequence>
<organism>
    <name type="scientific">Kocuria rhizophila (strain ATCC 9341 / DSM 348 / NBRC 103217 / DC2201)</name>
    <dbReference type="NCBI Taxonomy" id="378753"/>
    <lineage>
        <taxon>Bacteria</taxon>
        <taxon>Bacillati</taxon>
        <taxon>Actinomycetota</taxon>
        <taxon>Actinomycetes</taxon>
        <taxon>Micrococcales</taxon>
        <taxon>Micrococcaceae</taxon>
        <taxon>Kocuria</taxon>
    </lineage>
</organism>
<keyword id="KW-1185">Reference proteome</keyword>
<keyword id="KW-0687">Ribonucleoprotein</keyword>
<keyword id="KW-0689">Ribosomal protein</keyword>
<keyword id="KW-0694">RNA-binding</keyword>
<keyword id="KW-0699">rRNA-binding</keyword>
<reference key="1">
    <citation type="journal article" date="2008" name="J. Bacteriol.">
        <title>Complete genome sequence of the soil actinomycete Kocuria rhizophila.</title>
        <authorList>
            <person name="Takarada H."/>
            <person name="Sekine M."/>
            <person name="Kosugi H."/>
            <person name="Matsuo Y."/>
            <person name="Fujisawa T."/>
            <person name="Omata S."/>
            <person name="Kishi E."/>
            <person name="Shimizu A."/>
            <person name="Tsukatani N."/>
            <person name="Tanikawa S."/>
            <person name="Fujita N."/>
            <person name="Harayama S."/>
        </authorList>
    </citation>
    <scope>NUCLEOTIDE SEQUENCE [LARGE SCALE GENOMIC DNA]</scope>
    <source>
        <strain>ATCC 9341 / DSM 348 / NBRC 103217 / DC2201</strain>
    </source>
</reference>
<feature type="chain" id="PRO_1000126459" description="Small ribosomal subunit protein bS20">
    <location>
        <begin position="1"/>
        <end position="86"/>
    </location>
</feature>
<name>RS20_KOCRD</name>
<gene>
    <name evidence="1" type="primary">rpsT</name>
    <name type="ordered locus">KRH_13070</name>
</gene>
<comment type="function">
    <text evidence="1">Binds directly to 16S ribosomal RNA.</text>
</comment>
<comment type="similarity">
    <text evidence="1">Belongs to the bacterial ribosomal protein bS20 family.</text>
</comment>
<accession>B2GHV1</accession>